<name>RS12_SINFN</name>
<sequence length="123" mass="14029">MPTVNQLIRKPRQAQVKRNKVPALQENPQKRGVCTRVYTTTPRKPNSALRKVAKIRLTNGFEVIGYIPGEGHNLQEHSVVMIRGGRVKDLPGVRYHIIRGVLDTQGVKNRKQRRSKYGAKRPK</sequence>
<evidence type="ECO:0000250" key="1"/>
<evidence type="ECO:0000255" key="2">
    <source>
        <dbReference type="HAMAP-Rule" id="MF_00403"/>
    </source>
</evidence>
<evidence type="ECO:0000305" key="3"/>
<dbReference type="EMBL" id="CP001389">
    <property type="protein sequence ID" value="ACP24968.1"/>
    <property type="molecule type" value="Genomic_DNA"/>
</dbReference>
<dbReference type="RefSeq" id="WP_010969193.1">
    <property type="nucleotide sequence ID" value="NC_012587.1"/>
</dbReference>
<dbReference type="RefSeq" id="YP_002825721.1">
    <property type="nucleotide sequence ID" value="NC_012587.1"/>
</dbReference>
<dbReference type="SMR" id="C3MAX5"/>
<dbReference type="STRING" id="394.NGR_c11860"/>
<dbReference type="GeneID" id="97364698"/>
<dbReference type="KEGG" id="rhi:NGR_c11860"/>
<dbReference type="PATRIC" id="fig|394.7.peg.4002"/>
<dbReference type="eggNOG" id="COG0048">
    <property type="taxonomic scope" value="Bacteria"/>
</dbReference>
<dbReference type="HOGENOM" id="CLU_104295_1_2_5"/>
<dbReference type="OrthoDB" id="9802366at2"/>
<dbReference type="Proteomes" id="UP000001054">
    <property type="component" value="Chromosome"/>
</dbReference>
<dbReference type="GO" id="GO:0015935">
    <property type="term" value="C:small ribosomal subunit"/>
    <property type="evidence" value="ECO:0007669"/>
    <property type="project" value="InterPro"/>
</dbReference>
<dbReference type="GO" id="GO:0019843">
    <property type="term" value="F:rRNA binding"/>
    <property type="evidence" value="ECO:0007669"/>
    <property type="project" value="UniProtKB-UniRule"/>
</dbReference>
<dbReference type="GO" id="GO:0003735">
    <property type="term" value="F:structural constituent of ribosome"/>
    <property type="evidence" value="ECO:0007669"/>
    <property type="project" value="InterPro"/>
</dbReference>
<dbReference type="GO" id="GO:0000049">
    <property type="term" value="F:tRNA binding"/>
    <property type="evidence" value="ECO:0007669"/>
    <property type="project" value="UniProtKB-UniRule"/>
</dbReference>
<dbReference type="GO" id="GO:0006412">
    <property type="term" value="P:translation"/>
    <property type="evidence" value="ECO:0007669"/>
    <property type="project" value="UniProtKB-UniRule"/>
</dbReference>
<dbReference type="CDD" id="cd03368">
    <property type="entry name" value="Ribosomal_S12"/>
    <property type="match status" value="1"/>
</dbReference>
<dbReference type="FunFam" id="2.40.50.140:FF:000001">
    <property type="entry name" value="30S ribosomal protein S12"/>
    <property type="match status" value="1"/>
</dbReference>
<dbReference type="Gene3D" id="2.40.50.140">
    <property type="entry name" value="Nucleic acid-binding proteins"/>
    <property type="match status" value="1"/>
</dbReference>
<dbReference type="HAMAP" id="MF_00403_B">
    <property type="entry name" value="Ribosomal_uS12_B"/>
    <property type="match status" value="1"/>
</dbReference>
<dbReference type="InterPro" id="IPR012340">
    <property type="entry name" value="NA-bd_OB-fold"/>
</dbReference>
<dbReference type="InterPro" id="IPR006032">
    <property type="entry name" value="Ribosomal_uS12"/>
</dbReference>
<dbReference type="InterPro" id="IPR005679">
    <property type="entry name" value="Ribosomal_uS12_bac"/>
</dbReference>
<dbReference type="NCBIfam" id="TIGR00981">
    <property type="entry name" value="rpsL_bact"/>
    <property type="match status" value="1"/>
</dbReference>
<dbReference type="PANTHER" id="PTHR11652">
    <property type="entry name" value="30S RIBOSOMAL PROTEIN S12 FAMILY MEMBER"/>
    <property type="match status" value="1"/>
</dbReference>
<dbReference type="Pfam" id="PF00164">
    <property type="entry name" value="Ribosom_S12_S23"/>
    <property type="match status" value="1"/>
</dbReference>
<dbReference type="PIRSF" id="PIRSF002133">
    <property type="entry name" value="Ribosomal_S12/S23"/>
    <property type="match status" value="1"/>
</dbReference>
<dbReference type="PRINTS" id="PR01034">
    <property type="entry name" value="RIBOSOMALS12"/>
</dbReference>
<dbReference type="SUPFAM" id="SSF50249">
    <property type="entry name" value="Nucleic acid-binding proteins"/>
    <property type="match status" value="1"/>
</dbReference>
<dbReference type="PROSITE" id="PS00055">
    <property type="entry name" value="RIBOSOMAL_S12"/>
    <property type="match status" value="1"/>
</dbReference>
<organism>
    <name type="scientific">Sinorhizobium fredii (strain NBRC 101917 / NGR234)</name>
    <dbReference type="NCBI Taxonomy" id="394"/>
    <lineage>
        <taxon>Bacteria</taxon>
        <taxon>Pseudomonadati</taxon>
        <taxon>Pseudomonadota</taxon>
        <taxon>Alphaproteobacteria</taxon>
        <taxon>Hyphomicrobiales</taxon>
        <taxon>Rhizobiaceae</taxon>
        <taxon>Sinorhizobium/Ensifer group</taxon>
        <taxon>Sinorhizobium</taxon>
    </lineage>
</organism>
<feature type="chain" id="PRO_1000134650" description="Small ribosomal subunit protein uS12">
    <location>
        <begin position="1"/>
        <end position="123"/>
    </location>
</feature>
<feature type="modified residue" description="3-methylthioaspartic acid" evidence="1">
    <location>
        <position position="89"/>
    </location>
</feature>
<proteinExistence type="inferred from homology"/>
<accession>C3MAX5</accession>
<keyword id="KW-0488">Methylation</keyword>
<keyword id="KW-1185">Reference proteome</keyword>
<keyword id="KW-0687">Ribonucleoprotein</keyword>
<keyword id="KW-0689">Ribosomal protein</keyword>
<keyword id="KW-0694">RNA-binding</keyword>
<keyword id="KW-0699">rRNA-binding</keyword>
<keyword id="KW-0820">tRNA-binding</keyword>
<comment type="function">
    <text evidence="2">With S4 and S5 plays an important role in translational accuracy.</text>
</comment>
<comment type="function">
    <text evidence="2">Interacts with and stabilizes bases of the 16S rRNA that are involved in tRNA selection in the A site and with the mRNA backbone. Located at the interface of the 30S and 50S subunits, it traverses the body of the 30S subunit contacting proteins on the other side and probably holding the rRNA structure together. The combined cluster of proteins S8, S12 and S17 appears to hold together the shoulder and platform of the 30S subunit.</text>
</comment>
<comment type="subunit">
    <text evidence="2">Part of the 30S ribosomal subunit. Contacts proteins S8 and S17. May interact with IF1 in the 30S initiation complex.</text>
</comment>
<comment type="similarity">
    <text evidence="2">Belongs to the universal ribosomal protein uS12 family.</text>
</comment>
<gene>
    <name evidence="2" type="primary">rpsL</name>
    <name type="ordered locus">NGR_c11860</name>
</gene>
<reference key="1">
    <citation type="journal article" date="2009" name="Appl. Environ. Microbiol.">
        <title>Rhizobium sp. strain NGR234 possesses a remarkable number of secretion systems.</title>
        <authorList>
            <person name="Schmeisser C."/>
            <person name="Liesegang H."/>
            <person name="Krysciak D."/>
            <person name="Bakkou N."/>
            <person name="Le Quere A."/>
            <person name="Wollherr A."/>
            <person name="Heinemeyer I."/>
            <person name="Morgenstern B."/>
            <person name="Pommerening-Roeser A."/>
            <person name="Flores M."/>
            <person name="Palacios R."/>
            <person name="Brenner S."/>
            <person name="Gottschalk G."/>
            <person name="Schmitz R.A."/>
            <person name="Broughton W.J."/>
            <person name="Perret X."/>
            <person name="Strittmatter A.W."/>
            <person name="Streit W.R."/>
        </authorList>
    </citation>
    <scope>NUCLEOTIDE SEQUENCE [LARGE SCALE GENOMIC DNA]</scope>
    <source>
        <strain>NBRC 101917 / NGR234</strain>
    </source>
</reference>
<protein>
    <recommendedName>
        <fullName evidence="2">Small ribosomal subunit protein uS12</fullName>
    </recommendedName>
    <alternativeName>
        <fullName evidence="3">30S ribosomal protein S12</fullName>
    </alternativeName>
</protein>